<gene>
    <name evidence="1" type="primary">rbsD</name>
    <name type="ordered locus">ECIAI39_4353</name>
</gene>
<evidence type="ECO:0000255" key="1">
    <source>
        <dbReference type="HAMAP-Rule" id="MF_01661"/>
    </source>
</evidence>
<proteinExistence type="inferred from homology"/>
<keyword id="KW-0119">Carbohydrate metabolism</keyword>
<keyword id="KW-0963">Cytoplasm</keyword>
<keyword id="KW-0413">Isomerase</keyword>
<reference key="1">
    <citation type="journal article" date="2009" name="PLoS Genet.">
        <title>Organised genome dynamics in the Escherichia coli species results in highly diverse adaptive paths.</title>
        <authorList>
            <person name="Touchon M."/>
            <person name="Hoede C."/>
            <person name="Tenaillon O."/>
            <person name="Barbe V."/>
            <person name="Baeriswyl S."/>
            <person name="Bidet P."/>
            <person name="Bingen E."/>
            <person name="Bonacorsi S."/>
            <person name="Bouchier C."/>
            <person name="Bouvet O."/>
            <person name="Calteau A."/>
            <person name="Chiapello H."/>
            <person name="Clermont O."/>
            <person name="Cruveiller S."/>
            <person name="Danchin A."/>
            <person name="Diard M."/>
            <person name="Dossat C."/>
            <person name="Karoui M.E."/>
            <person name="Frapy E."/>
            <person name="Garry L."/>
            <person name="Ghigo J.M."/>
            <person name="Gilles A.M."/>
            <person name="Johnson J."/>
            <person name="Le Bouguenec C."/>
            <person name="Lescat M."/>
            <person name="Mangenot S."/>
            <person name="Martinez-Jehanne V."/>
            <person name="Matic I."/>
            <person name="Nassif X."/>
            <person name="Oztas S."/>
            <person name="Petit M.A."/>
            <person name="Pichon C."/>
            <person name="Rouy Z."/>
            <person name="Ruf C.S."/>
            <person name="Schneider D."/>
            <person name="Tourret J."/>
            <person name="Vacherie B."/>
            <person name="Vallenet D."/>
            <person name="Medigue C."/>
            <person name="Rocha E.P.C."/>
            <person name="Denamur E."/>
        </authorList>
    </citation>
    <scope>NUCLEOTIDE SEQUENCE [LARGE SCALE GENOMIC DNA]</scope>
    <source>
        <strain>IAI39 / ExPEC</strain>
    </source>
</reference>
<name>RBSD_ECO7I</name>
<protein>
    <recommendedName>
        <fullName evidence="1">D-ribose pyranase</fullName>
        <ecNumber evidence="1">5.4.99.62</ecNumber>
    </recommendedName>
</protein>
<feature type="chain" id="PRO_1000187144" description="D-ribose pyranase">
    <location>
        <begin position="1"/>
        <end position="139"/>
    </location>
</feature>
<feature type="active site" description="Proton donor" evidence="1">
    <location>
        <position position="20"/>
    </location>
</feature>
<feature type="binding site" evidence="1">
    <location>
        <position position="28"/>
    </location>
    <ligand>
        <name>substrate</name>
    </ligand>
</feature>
<feature type="binding site" evidence="1">
    <location>
        <position position="106"/>
    </location>
    <ligand>
        <name>substrate</name>
    </ligand>
</feature>
<feature type="binding site" evidence="1">
    <location>
        <begin position="128"/>
        <end position="130"/>
    </location>
    <ligand>
        <name>substrate</name>
    </ligand>
</feature>
<comment type="function">
    <text evidence="1">Catalyzes the interconversion of beta-pyran and beta-furan forms of D-ribose.</text>
</comment>
<comment type="catalytic activity">
    <reaction evidence="1">
        <text>beta-D-ribopyranose = beta-D-ribofuranose</text>
        <dbReference type="Rhea" id="RHEA:25432"/>
        <dbReference type="ChEBI" id="CHEBI:27476"/>
        <dbReference type="ChEBI" id="CHEBI:47002"/>
        <dbReference type="EC" id="5.4.99.62"/>
    </reaction>
</comment>
<comment type="pathway">
    <text evidence="1">Carbohydrate metabolism; D-ribose degradation; D-ribose 5-phosphate from beta-D-ribopyranose: step 1/2.</text>
</comment>
<comment type="subunit">
    <text evidence="1">Homodecamer.</text>
</comment>
<comment type="subcellular location">
    <subcellularLocation>
        <location evidence="1">Cytoplasm</location>
    </subcellularLocation>
</comment>
<comment type="similarity">
    <text evidence="1">Belongs to the RbsD / FucU family. RbsD subfamily.</text>
</comment>
<organism>
    <name type="scientific">Escherichia coli O7:K1 (strain IAI39 / ExPEC)</name>
    <dbReference type="NCBI Taxonomy" id="585057"/>
    <lineage>
        <taxon>Bacteria</taxon>
        <taxon>Pseudomonadati</taxon>
        <taxon>Pseudomonadota</taxon>
        <taxon>Gammaproteobacteria</taxon>
        <taxon>Enterobacterales</taxon>
        <taxon>Enterobacteriaceae</taxon>
        <taxon>Escherichia</taxon>
    </lineage>
</organism>
<accession>B7NR51</accession>
<dbReference type="EC" id="5.4.99.62" evidence="1"/>
<dbReference type="EMBL" id="CU928164">
    <property type="protein sequence ID" value="CAR20459.1"/>
    <property type="molecule type" value="Genomic_DNA"/>
</dbReference>
<dbReference type="RefSeq" id="WP_000715936.1">
    <property type="nucleotide sequence ID" value="NC_011750.1"/>
</dbReference>
<dbReference type="RefSeq" id="YP_002410228.1">
    <property type="nucleotide sequence ID" value="NC_011750.1"/>
</dbReference>
<dbReference type="SMR" id="B7NR51"/>
<dbReference type="STRING" id="585057.ECIAI39_4353"/>
<dbReference type="GeneID" id="93778201"/>
<dbReference type="KEGG" id="ect:ECIAI39_4353"/>
<dbReference type="PATRIC" id="fig|585057.6.peg.4499"/>
<dbReference type="HOGENOM" id="CLU_135498_0_0_6"/>
<dbReference type="UniPathway" id="UPA00916">
    <property type="reaction ID" value="UER00888"/>
</dbReference>
<dbReference type="Proteomes" id="UP000000749">
    <property type="component" value="Chromosome"/>
</dbReference>
<dbReference type="GO" id="GO:0005829">
    <property type="term" value="C:cytosol"/>
    <property type="evidence" value="ECO:0007669"/>
    <property type="project" value="TreeGrafter"/>
</dbReference>
<dbReference type="GO" id="GO:0062193">
    <property type="term" value="F:D-ribose pyranase activity"/>
    <property type="evidence" value="ECO:0007669"/>
    <property type="project" value="UniProtKB-EC"/>
</dbReference>
<dbReference type="GO" id="GO:0016872">
    <property type="term" value="F:intramolecular lyase activity"/>
    <property type="evidence" value="ECO:0007669"/>
    <property type="project" value="UniProtKB-UniRule"/>
</dbReference>
<dbReference type="GO" id="GO:0048029">
    <property type="term" value="F:monosaccharide binding"/>
    <property type="evidence" value="ECO:0007669"/>
    <property type="project" value="InterPro"/>
</dbReference>
<dbReference type="GO" id="GO:0019303">
    <property type="term" value="P:D-ribose catabolic process"/>
    <property type="evidence" value="ECO:0007669"/>
    <property type="project" value="UniProtKB-UniRule"/>
</dbReference>
<dbReference type="FunFam" id="3.40.1650.10:FF:000002">
    <property type="entry name" value="D-ribose pyranase"/>
    <property type="match status" value="1"/>
</dbReference>
<dbReference type="Gene3D" id="3.40.1650.10">
    <property type="entry name" value="RbsD-like domain"/>
    <property type="match status" value="1"/>
</dbReference>
<dbReference type="HAMAP" id="MF_01661">
    <property type="entry name" value="D_rib_pyranase"/>
    <property type="match status" value="1"/>
</dbReference>
<dbReference type="InterPro" id="IPR023064">
    <property type="entry name" value="D-ribose_pyranase"/>
</dbReference>
<dbReference type="InterPro" id="IPR023750">
    <property type="entry name" value="RbsD-like_sf"/>
</dbReference>
<dbReference type="InterPro" id="IPR007721">
    <property type="entry name" value="RbsD_FucU"/>
</dbReference>
<dbReference type="NCBIfam" id="NF008761">
    <property type="entry name" value="PRK11797.1"/>
    <property type="match status" value="1"/>
</dbReference>
<dbReference type="PANTHER" id="PTHR37831">
    <property type="entry name" value="D-RIBOSE PYRANASE"/>
    <property type="match status" value="1"/>
</dbReference>
<dbReference type="PANTHER" id="PTHR37831:SF1">
    <property type="entry name" value="D-RIBOSE PYRANASE"/>
    <property type="match status" value="1"/>
</dbReference>
<dbReference type="Pfam" id="PF05025">
    <property type="entry name" value="RbsD_FucU"/>
    <property type="match status" value="1"/>
</dbReference>
<dbReference type="SUPFAM" id="SSF102546">
    <property type="entry name" value="RbsD-like"/>
    <property type="match status" value="1"/>
</dbReference>
<sequence>MKKGTVLNSDISSVISRLGHTDTLVVCDAGLPIPKSTTRIDMALTQGVPSFMQVLGVVTNEMQVEAAIIAEEIKQHNPQLHETLLTHLEQLQKHQGNTIEIRYTTHEQFKQQTAESQAVIRSGECSPYANIILCAGVTF</sequence>